<sequence>MSCGTYKRGSLTFLLVVALAVPVFCQSRTRLKWKTRISTTPEVMVEERALVRNETNNRYVKIYSTRHPKKTAISNATSTIDFEKRKVAIKVRTYVNSQRTEACYLMDPINTHDMTMTVNVIKSRNQTQVIDKTAVMDMVVNSNKLTIDDLKKDYELSRIYKECDKAVVESGLYTIIKGTPSASATSTDPPIDVLGLIPQSGIHSQHIRIHFNTNPQTAPV</sequence>
<evidence type="ECO:0000255" key="1"/>
<evidence type="ECO:0000269" key="2">
    <source>
    </source>
</evidence>
<evidence type="ECO:0000305" key="3"/>
<protein>
    <recommendedName>
        <fullName>Uncharacterized shell protein 11</fullName>
    </recommendedName>
    <alternativeName>
        <fullName>Nacre uncharacterized shell protein 18</fullName>
    </alternativeName>
</protein>
<organism>
    <name type="scientific">Margaritifera margaritifera</name>
    <name type="common">Freshwater pearl mussel</name>
    <dbReference type="NCBI Taxonomy" id="102329"/>
    <lineage>
        <taxon>Eukaryota</taxon>
        <taxon>Metazoa</taxon>
        <taxon>Spiralia</taxon>
        <taxon>Lophotrochozoa</taxon>
        <taxon>Mollusca</taxon>
        <taxon>Bivalvia</taxon>
        <taxon>Autobranchia</taxon>
        <taxon>Pteriomorphia</taxon>
        <taxon>Pterioida</taxon>
        <taxon>Pterioidea</taxon>
        <taxon>Pteriidae</taxon>
        <taxon>Pinctada</taxon>
    </lineage>
</organism>
<feature type="signal peptide" evidence="1">
    <location>
        <begin position="1"/>
        <end position="25"/>
    </location>
</feature>
<feature type="chain" id="PRO_0000417931" description="Uncharacterized shell protein 11" evidence="1">
    <location>
        <begin position="26"/>
        <end position="220"/>
    </location>
</feature>
<keyword id="KW-0903">Direct protein sequencing</keyword>
<keyword id="KW-0964">Secreted</keyword>
<keyword id="KW-0732">Signal</keyword>
<dbReference type="EMBL" id="HE610409">
    <property type="protein sequence ID" value="CCE46183.1"/>
    <property type="molecule type" value="mRNA"/>
</dbReference>
<dbReference type="GO" id="GO:0005576">
    <property type="term" value="C:extracellular region"/>
    <property type="evidence" value="ECO:0007669"/>
    <property type="project" value="UniProtKB-SubCell"/>
</dbReference>
<reference evidence="3" key="1">
    <citation type="journal article" date="2010" name="BMC Genomics">
        <title>Transcriptome and proteome analysis of Pinctada margaritifera calcifying mantle and shell: focus on biomineralization.</title>
        <authorList>
            <person name="Joubert C."/>
            <person name="Piquemal D."/>
            <person name="Marie B."/>
            <person name="Manchon L."/>
            <person name="Pierrat F."/>
            <person name="Zanella-Cleon I."/>
            <person name="Cochennec-Laureau N."/>
            <person name="Gueguen Y."/>
            <person name="Montagnani C."/>
        </authorList>
    </citation>
    <scope>NUCLEOTIDE SEQUENCE [MRNA]</scope>
    <scope>IDENTIFICATION</scope>
    <source>
        <tissue>Mantle</tissue>
    </source>
</reference>
<reference key="2">
    <citation type="journal article" date="2012" name="Proc. Natl. Acad. Sci. U.S.A.">
        <title>Different secretory repertoires control the biomineralization processes of prism and nacre deposition of the pearl oyster shell.</title>
        <authorList>
            <person name="Marie B."/>
            <person name="Joubert C."/>
            <person name="Tayale A."/>
            <person name="Zanella-Cleon I."/>
            <person name="Belliard C."/>
            <person name="Piquemal D."/>
            <person name="Cochennec-Laureau N."/>
            <person name="Marin F."/>
            <person name="Gueguen Y."/>
            <person name="Montagnani C."/>
        </authorList>
    </citation>
    <scope>PROTEIN SEQUENCE OF 166-177</scope>
    <scope>SUBCELLULAR LOCATION</scope>
    <scope>TISSUE SPECIFICITY</scope>
    <source>
        <tissue>Shell</tissue>
    </source>
</reference>
<name>USP11_PINMG</name>
<accession>H2A0P2</accession>
<comment type="subcellular location">
    <subcellularLocation>
        <location evidence="2">Secreted</location>
    </subcellularLocation>
</comment>
<comment type="tissue specificity">
    <text evidence="2">Nacreous layer of shell (at protein level). Expressed primarily in the mantle with highest level in the mantle pallium and lower level in the mantle edge.</text>
</comment>
<proteinExistence type="evidence at protein level"/>